<gene>
    <name evidence="1" type="primary">rplN</name>
    <name type="ordered locus">Bfl201</name>
</gene>
<proteinExistence type="inferred from homology"/>
<protein>
    <recommendedName>
        <fullName evidence="1">Large ribosomal subunit protein uL14</fullName>
    </recommendedName>
    <alternativeName>
        <fullName evidence="2">50S ribosomal protein L14</fullName>
    </alternativeName>
</protein>
<organism>
    <name type="scientific">Blochmanniella floridana</name>
    <dbReference type="NCBI Taxonomy" id="203907"/>
    <lineage>
        <taxon>Bacteria</taxon>
        <taxon>Pseudomonadati</taxon>
        <taxon>Pseudomonadota</taxon>
        <taxon>Gammaproteobacteria</taxon>
        <taxon>Enterobacterales</taxon>
        <taxon>Enterobacteriaceae</taxon>
        <taxon>ant endosymbionts</taxon>
        <taxon>Candidatus Blochmanniella</taxon>
    </lineage>
</organism>
<dbReference type="EMBL" id="BX248583">
    <property type="protein sequence ID" value="CAD83716.1"/>
    <property type="molecule type" value="Genomic_DNA"/>
</dbReference>
<dbReference type="SMR" id="Q7VQD8"/>
<dbReference type="STRING" id="203907.Bfl201"/>
<dbReference type="KEGG" id="bfl:Bfl201"/>
<dbReference type="eggNOG" id="COG0093">
    <property type="taxonomic scope" value="Bacteria"/>
</dbReference>
<dbReference type="HOGENOM" id="CLU_095071_2_1_6"/>
<dbReference type="OrthoDB" id="9806379at2"/>
<dbReference type="Proteomes" id="UP000002192">
    <property type="component" value="Chromosome"/>
</dbReference>
<dbReference type="GO" id="GO:0022625">
    <property type="term" value="C:cytosolic large ribosomal subunit"/>
    <property type="evidence" value="ECO:0007669"/>
    <property type="project" value="TreeGrafter"/>
</dbReference>
<dbReference type="GO" id="GO:0070180">
    <property type="term" value="F:large ribosomal subunit rRNA binding"/>
    <property type="evidence" value="ECO:0007669"/>
    <property type="project" value="TreeGrafter"/>
</dbReference>
<dbReference type="GO" id="GO:0003735">
    <property type="term" value="F:structural constituent of ribosome"/>
    <property type="evidence" value="ECO:0007669"/>
    <property type="project" value="InterPro"/>
</dbReference>
<dbReference type="GO" id="GO:0006412">
    <property type="term" value="P:translation"/>
    <property type="evidence" value="ECO:0007669"/>
    <property type="project" value="UniProtKB-UniRule"/>
</dbReference>
<dbReference type="CDD" id="cd00337">
    <property type="entry name" value="Ribosomal_uL14"/>
    <property type="match status" value="1"/>
</dbReference>
<dbReference type="FunFam" id="2.40.150.20:FF:000001">
    <property type="entry name" value="50S ribosomal protein L14"/>
    <property type="match status" value="1"/>
</dbReference>
<dbReference type="Gene3D" id="2.40.150.20">
    <property type="entry name" value="Ribosomal protein L14"/>
    <property type="match status" value="1"/>
</dbReference>
<dbReference type="HAMAP" id="MF_01367">
    <property type="entry name" value="Ribosomal_uL14"/>
    <property type="match status" value="1"/>
</dbReference>
<dbReference type="InterPro" id="IPR000218">
    <property type="entry name" value="Ribosomal_uL14"/>
</dbReference>
<dbReference type="InterPro" id="IPR005745">
    <property type="entry name" value="Ribosomal_uL14_bac-type"/>
</dbReference>
<dbReference type="InterPro" id="IPR019972">
    <property type="entry name" value="Ribosomal_uL14_CS"/>
</dbReference>
<dbReference type="InterPro" id="IPR036853">
    <property type="entry name" value="Ribosomal_uL14_sf"/>
</dbReference>
<dbReference type="NCBIfam" id="TIGR01067">
    <property type="entry name" value="rplN_bact"/>
    <property type="match status" value="1"/>
</dbReference>
<dbReference type="PANTHER" id="PTHR11761">
    <property type="entry name" value="50S/60S RIBOSOMAL PROTEIN L14/L23"/>
    <property type="match status" value="1"/>
</dbReference>
<dbReference type="PANTHER" id="PTHR11761:SF3">
    <property type="entry name" value="LARGE RIBOSOMAL SUBUNIT PROTEIN UL14M"/>
    <property type="match status" value="1"/>
</dbReference>
<dbReference type="Pfam" id="PF00238">
    <property type="entry name" value="Ribosomal_L14"/>
    <property type="match status" value="1"/>
</dbReference>
<dbReference type="SMART" id="SM01374">
    <property type="entry name" value="Ribosomal_L14"/>
    <property type="match status" value="1"/>
</dbReference>
<dbReference type="SUPFAM" id="SSF50193">
    <property type="entry name" value="Ribosomal protein L14"/>
    <property type="match status" value="1"/>
</dbReference>
<dbReference type="PROSITE" id="PS00049">
    <property type="entry name" value="RIBOSOMAL_L14"/>
    <property type="match status" value="1"/>
</dbReference>
<evidence type="ECO:0000255" key="1">
    <source>
        <dbReference type="HAMAP-Rule" id="MF_01367"/>
    </source>
</evidence>
<evidence type="ECO:0000305" key="2"/>
<name>RL14_BLOFL</name>
<sequence>MIQERTILNVADNSGARFAMCIKVLGGSKRRYANIGDVIKVTVKEAIPKAKVKKGDVLQAVIVRTKKGIRRIDGSIIRFDNNACVLLNDTNMQPLGTRIFGPVTRELRYANFVRIISLAPEVL</sequence>
<comment type="function">
    <text evidence="1">Binds to 23S rRNA. Forms part of two intersubunit bridges in the 70S ribosome.</text>
</comment>
<comment type="subunit">
    <text evidence="1">Part of the 50S ribosomal subunit. Forms a cluster with proteins L3 and L19. In the 70S ribosome, L14 and L19 interact and together make contacts with the 16S rRNA in bridges B5 and B8.</text>
</comment>
<comment type="similarity">
    <text evidence="1">Belongs to the universal ribosomal protein uL14 family.</text>
</comment>
<keyword id="KW-1185">Reference proteome</keyword>
<keyword id="KW-0687">Ribonucleoprotein</keyword>
<keyword id="KW-0689">Ribosomal protein</keyword>
<keyword id="KW-0694">RNA-binding</keyword>
<keyword id="KW-0699">rRNA-binding</keyword>
<feature type="chain" id="PRO_1000055523" description="Large ribosomal subunit protein uL14">
    <location>
        <begin position="1"/>
        <end position="123"/>
    </location>
</feature>
<reference key="1">
    <citation type="journal article" date="2003" name="Proc. Natl. Acad. Sci. U.S.A.">
        <title>The genome sequence of Blochmannia floridanus: comparative analysis of reduced genomes.</title>
        <authorList>
            <person name="Gil R."/>
            <person name="Silva F.J."/>
            <person name="Zientz E."/>
            <person name="Delmotte F."/>
            <person name="Gonzalez-Candelas F."/>
            <person name="Latorre A."/>
            <person name="Rausell C."/>
            <person name="Kamerbeek J."/>
            <person name="Gadau J."/>
            <person name="Hoelldobler B."/>
            <person name="van Ham R.C.H.J."/>
            <person name="Gross R."/>
            <person name="Moya A."/>
        </authorList>
    </citation>
    <scope>NUCLEOTIDE SEQUENCE [LARGE SCALE GENOMIC DNA]</scope>
</reference>
<accession>Q7VQD8</accession>